<protein>
    <recommendedName>
        <fullName>Mortality factor 4-like protein 2</fullName>
    </recommendedName>
</protein>
<evidence type="ECO:0000250" key="1"/>
<evidence type="ECO:0000250" key="2">
    <source>
        <dbReference type="UniProtKB" id="Q15014"/>
    </source>
</evidence>
<evidence type="ECO:0000255" key="3">
    <source>
        <dbReference type="PROSITE-ProRule" id="PRU00972"/>
    </source>
</evidence>
<evidence type="ECO:0000256" key="4">
    <source>
        <dbReference type="SAM" id="MobiDB-lite"/>
    </source>
</evidence>
<sequence>MSSRKQGSQPRGQQSAEEENFKKPTRSNMQRSKMRGASSGKKTAGPQQKNLEPALPGRWGGRSAENPPSGSVRKTRKNKQKTPGNEDGGSTSEAPQPPRKKRARADPTVESEEAFKNRMEVKVKIPEELKPWLVEDWDLVTRQKQLFQLPAKKNVDAILEEYANCKKSQGNVDNKEYAVNEVVAGIKEYFNVMLGTQLLYKFERPQYAEILLAHPDAPMSQVYGAPHLLRLFVRIGAMLAYTPLDEKSLALLLGYLHDFLKYLAKNSASLFTASDYKVASAEYHRKAL</sequence>
<gene>
    <name type="primary">MORF4L2</name>
    <name type="ORF">QccE-15641</name>
</gene>
<feature type="chain" id="PRO_0000247602" description="Mortality factor 4-like protein 2">
    <location>
        <begin position="1"/>
        <end position="288"/>
    </location>
</feature>
<feature type="domain" description="MRG" evidence="3">
    <location>
        <begin position="117"/>
        <end position="288"/>
    </location>
</feature>
<feature type="region of interest" description="Disordered" evidence="4">
    <location>
        <begin position="1"/>
        <end position="113"/>
    </location>
</feature>
<feature type="compositionally biased region" description="Polar residues" evidence="4">
    <location>
        <begin position="1"/>
        <end position="15"/>
    </location>
</feature>
<feature type="modified residue" description="Phosphoserine" evidence="2">
    <location>
        <position position="71"/>
    </location>
</feature>
<proteinExistence type="evidence at transcript level"/>
<keyword id="KW-0156">Chromatin regulator</keyword>
<keyword id="KW-0227">DNA damage</keyword>
<keyword id="KW-0234">DNA repair</keyword>
<keyword id="KW-0341">Growth regulation</keyword>
<keyword id="KW-0539">Nucleus</keyword>
<keyword id="KW-0597">Phosphoprotein</keyword>
<keyword id="KW-1185">Reference proteome</keyword>
<keyword id="KW-0804">Transcription</keyword>
<keyword id="KW-0805">Transcription regulation</keyword>
<accession>Q4R578</accession>
<organism>
    <name type="scientific">Macaca fascicularis</name>
    <name type="common">Crab-eating macaque</name>
    <name type="synonym">Cynomolgus monkey</name>
    <dbReference type="NCBI Taxonomy" id="9541"/>
    <lineage>
        <taxon>Eukaryota</taxon>
        <taxon>Metazoa</taxon>
        <taxon>Chordata</taxon>
        <taxon>Craniata</taxon>
        <taxon>Vertebrata</taxon>
        <taxon>Euteleostomi</taxon>
        <taxon>Mammalia</taxon>
        <taxon>Eutheria</taxon>
        <taxon>Euarchontoglires</taxon>
        <taxon>Primates</taxon>
        <taxon>Haplorrhini</taxon>
        <taxon>Catarrhini</taxon>
        <taxon>Cercopithecidae</taxon>
        <taxon>Cercopithecinae</taxon>
        <taxon>Macaca</taxon>
    </lineage>
</organism>
<comment type="function">
    <text evidence="1">Component of the NuA4 histone acetyltransferase complex which is involved in transcriptional activation of select genes principally by acetylation of nucleosomal histone H4 and H2A. This modification may both alter nucleosome - DNA interactions and promote interaction of the modified histones with other proteins which positively regulate transcription. This complex may be required for the activation of transcriptional programs associated with oncogene and proto-oncogene mediated growth induction, tumor suppressor mediated growth arrest and replicative senescence, apoptosis, and DNA repair. The NuA4 complex ATPase and helicase activities seem to be, at least in part, contributed by the association of RUVBL1 and RUVBL2 with EP400. NuA4 may also play a direct role in DNA repair when directly recruited to sites of DNA damage. Also a component of the MSIN3A complex which acts to repress transcription by deacetylation of nucleosomal histones (By similarity).</text>
</comment>
<comment type="subunit">
    <text evidence="1">Component of the NuA4 histone acetyltransferase complex which contains the catalytic subunit KAT5/TIP60 and the subunits EP400, TRRAP/PAF400, BRD8/SMAP, EPC1, DMAP1/DNMAP1, RUVBL1/TIP49, RUVBL2, ING3, actin, ACTL6A/BAF53A, MORF4L1/MRG15, MORF4L2/MRGX, MRGBP, YEATS4/GAS41 and VPS72/YL1. The NuA4 complex interacts with MYC and the adenovirus E1A protein. MORF4L1 may also participate in the formation of NuA4 related complexes which lack the KAT5/TIP60 catalytic subunit, but which include the SWI/SNF related protein SRCAP. Component of the MSIN3A histone deacetylase complex, which includes SIN3A, HDAC2, ARID4B, MORF4L1, RBBP4/RbAp48, and RBBP7/RbAp46. Interacts with MRFAP1 and RB1. May also interact with one or more as yet undefined members of the TLE (transducin-like enhancer of split) family of transcriptional repressors (By similarity).</text>
</comment>
<comment type="subcellular location">
    <subcellularLocation>
        <location evidence="3">Nucleus</location>
    </subcellularLocation>
</comment>
<dbReference type="EMBL" id="AB169666">
    <property type="protein sequence ID" value="BAE01747.1"/>
    <property type="molecule type" value="mRNA"/>
</dbReference>
<dbReference type="RefSeq" id="NP_001270298.1">
    <property type="nucleotide sequence ID" value="NM_001283369.1"/>
</dbReference>
<dbReference type="SMR" id="Q4R578"/>
<dbReference type="STRING" id="9541.ENSMFAP00000024295"/>
<dbReference type="eggNOG" id="KOG3001">
    <property type="taxonomic scope" value="Eukaryota"/>
</dbReference>
<dbReference type="Proteomes" id="UP000233100">
    <property type="component" value="Unplaced"/>
</dbReference>
<dbReference type="GO" id="GO:0035267">
    <property type="term" value="C:NuA4 histone acetyltransferase complex"/>
    <property type="evidence" value="ECO:0007669"/>
    <property type="project" value="TreeGrafter"/>
</dbReference>
<dbReference type="GO" id="GO:0005634">
    <property type="term" value="C:nucleus"/>
    <property type="evidence" value="ECO:0007669"/>
    <property type="project" value="UniProtKB-SubCell"/>
</dbReference>
<dbReference type="GO" id="GO:0006325">
    <property type="term" value="P:chromatin organization"/>
    <property type="evidence" value="ECO:0007669"/>
    <property type="project" value="UniProtKB-KW"/>
</dbReference>
<dbReference type="GO" id="GO:0006281">
    <property type="term" value="P:DNA repair"/>
    <property type="evidence" value="ECO:0007669"/>
    <property type="project" value="UniProtKB-KW"/>
</dbReference>
<dbReference type="GO" id="GO:0006355">
    <property type="term" value="P:regulation of DNA-templated transcription"/>
    <property type="evidence" value="ECO:0007669"/>
    <property type="project" value="InterPro"/>
</dbReference>
<dbReference type="FunFam" id="1.10.274.30:FF:000001">
    <property type="entry name" value="Mortality factor 4-like protein 1"/>
    <property type="match status" value="1"/>
</dbReference>
<dbReference type="Gene3D" id="1.10.274.30">
    <property type="entry name" value="MRG domain"/>
    <property type="match status" value="1"/>
</dbReference>
<dbReference type="InterPro" id="IPR008676">
    <property type="entry name" value="MRG"/>
</dbReference>
<dbReference type="InterPro" id="IPR038217">
    <property type="entry name" value="MRG_C_sf"/>
</dbReference>
<dbReference type="InterPro" id="IPR026541">
    <property type="entry name" value="MRG_dom"/>
</dbReference>
<dbReference type="PANTHER" id="PTHR10880">
    <property type="entry name" value="MORTALITY FACTOR 4-LIKE PROTEIN"/>
    <property type="match status" value="1"/>
</dbReference>
<dbReference type="PANTHER" id="PTHR10880:SF25">
    <property type="entry name" value="MORTALITY FACTOR 4-LIKE PROTEIN 2"/>
    <property type="match status" value="1"/>
</dbReference>
<dbReference type="Pfam" id="PF05712">
    <property type="entry name" value="MRG"/>
    <property type="match status" value="1"/>
</dbReference>
<dbReference type="PROSITE" id="PS51640">
    <property type="entry name" value="MRG"/>
    <property type="match status" value="1"/>
</dbReference>
<name>MO4L2_MACFA</name>
<reference key="1">
    <citation type="submission" date="2005-06" db="EMBL/GenBank/DDBJ databases">
        <title>DNA sequences of macaque genes expressed in brain or testis and its evolutionary implications.</title>
        <authorList>
            <consortium name="International consortium for macaque cDNA sequencing and analysis"/>
        </authorList>
    </citation>
    <scope>NUCLEOTIDE SEQUENCE [LARGE SCALE MRNA]</scope>
    <source>
        <tissue>Brain cortex</tissue>
    </source>
</reference>